<comment type="function">
    <text evidence="1">This is one of the proteins that bind and probably mediate the attachment of the 5S RNA into the large ribosomal subunit, where it forms part of the central protuberance.</text>
</comment>
<comment type="subunit">
    <text evidence="1">Part of the 50S ribosomal subunit; part of the 5S rRNA/L5/L18/L25 subcomplex. Contacts the 5S and 23S rRNAs.</text>
</comment>
<comment type="similarity">
    <text evidence="1">Belongs to the universal ribosomal protein uL18 family.</text>
</comment>
<dbReference type="EMBL" id="AE017355">
    <property type="protein sequence ID" value="AAT63879.1"/>
    <property type="molecule type" value="Genomic_DNA"/>
</dbReference>
<dbReference type="RefSeq" id="WP_000628816.1">
    <property type="nucleotide sequence ID" value="NC_005957.1"/>
</dbReference>
<dbReference type="RefSeq" id="YP_034478.1">
    <property type="nucleotide sequence ID" value="NC_005957.1"/>
</dbReference>
<dbReference type="SMR" id="Q6HPP2"/>
<dbReference type="GeneID" id="93010927"/>
<dbReference type="KEGG" id="btk:BT9727_0122"/>
<dbReference type="PATRIC" id="fig|281309.8.peg.123"/>
<dbReference type="HOGENOM" id="CLU_098841_0_1_9"/>
<dbReference type="PRO" id="PR:Q6HPP2"/>
<dbReference type="Proteomes" id="UP000001301">
    <property type="component" value="Chromosome"/>
</dbReference>
<dbReference type="GO" id="GO:0022625">
    <property type="term" value="C:cytosolic large ribosomal subunit"/>
    <property type="evidence" value="ECO:0007669"/>
    <property type="project" value="TreeGrafter"/>
</dbReference>
<dbReference type="GO" id="GO:0008097">
    <property type="term" value="F:5S rRNA binding"/>
    <property type="evidence" value="ECO:0007669"/>
    <property type="project" value="TreeGrafter"/>
</dbReference>
<dbReference type="GO" id="GO:0003735">
    <property type="term" value="F:structural constituent of ribosome"/>
    <property type="evidence" value="ECO:0007669"/>
    <property type="project" value="InterPro"/>
</dbReference>
<dbReference type="GO" id="GO:0006412">
    <property type="term" value="P:translation"/>
    <property type="evidence" value="ECO:0007669"/>
    <property type="project" value="UniProtKB-UniRule"/>
</dbReference>
<dbReference type="CDD" id="cd00432">
    <property type="entry name" value="Ribosomal_L18_L5e"/>
    <property type="match status" value="1"/>
</dbReference>
<dbReference type="FunFam" id="3.30.420.100:FF:000001">
    <property type="entry name" value="50S ribosomal protein L18"/>
    <property type="match status" value="1"/>
</dbReference>
<dbReference type="Gene3D" id="3.30.420.100">
    <property type="match status" value="1"/>
</dbReference>
<dbReference type="HAMAP" id="MF_01337_B">
    <property type="entry name" value="Ribosomal_uL18_B"/>
    <property type="match status" value="1"/>
</dbReference>
<dbReference type="InterPro" id="IPR004389">
    <property type="entry name" value="Ribosomal_uL18_bac-type"/>
</dbReference>
<dbReference type="InterPro" id="IPR005484">
    <property type="entry name" value="Ribosomal_uL18_bac/euk"/>
</dbReference>
<dbReference type="NCBIfam" id="TIGR00060">
    <property type="entry name" value="L18_bact"/>
    <property type="match status" value="1"/>
</dbReference>
<dbReference type="PANTHER" id="PTHR12899">
    <property type="entry name" value="39S RIBOSOMAL PROTEIN L18, MITOCHONDRIAL"/>
    <property type="match status" value="1"/>
</dbReference>
<dbReference type="PANTHER" id="PTHR12899:SF3">
    <property type="entry name" value="LARGE RIBOSOMAL SUBUNIT PROTEIN UL18M"/>
    <property type="match status" value="1"/>
</dbReference>
<dbReference type="Pfam" id="PF00861">
    <property type="entry name" value="Ribosomal_L18p"/>
    <property type="match status" value="1"/>
</dbReference>
<dbReference type="SUPFAM" id="SSF53137">
    <property type="entry name" value="Translational machinery components"/>
    <property type="match status" value="1"/>
</dbReference>
<evidence type="ECO:0000255" key="1">
    <source>
        <dbReference type="HAMAP-Rule" id="MF_01337"/>
    </source>
</evidence>
<evidence type="ECO:0000305" key="2"/>
<keyword id="KW-0687">Ribonucleoprotein</keyword>
<keyword id="KW-0689">Ribosomal protein</keyword>
<keyword id="KW-0694">RNA-binding</keyword>
<keyword id="KW-0699">rRNA-binding</keyword>
<proteinExistence type="inferred from homology"/>
<organism>
    <name type="scientific">Bacillus thuringiensis subsp. konkukian (strain 97-27)</name>
    <dbReference type="NCBI Taxonomy" id="281309"/>
    <lineage>
        <taxon>Bacteria</taxon>
        <taxon>Bacillati</taxon>
        <taxon>Bacillota</taxon>
        <taxon>Bacilli</taxon>
        <taxon>Bacillales</taxon>
        <taxon>Bacillaceae</taxon>
        <taxon>Bacillus</taxon>
        <taxon>Bacillus cereus group</taxon>
    </lineage>
</organism>
<protein>
    <recommendedName>
        <fullName evidence="1">Large ribosomal subunit protein uL18</fullName>
    </recommendedName>
    <alternativeName>
        <fullName evidence="2">50S ribosomal protein L18</fullName>
    </alternativeName>
</protein>
<feature type="chain" id="PRO_0000131212" description="Large ribosomal subunit protein uL18">
    <location>
        <begin position="1"/>
        <end position="120"/>
    </location>
</feature>
<accession>Q6HPP2</accession>
<reference key="1">
    <citation type="journal article" date="2006" name="J. Bacteriol.">
        <title>Pathogenomic sequence analysis of Bacillus cereus and Bacillus thuringiensis isolates closely related to Bacillus anthracis.</title>
        <authorList>
            <person name="Han C.S."/>
            <person name="Xie G."/>
            <person name="Challacombe J.F."/>
            <person name="Altherr M.R."/>
            <person name="Bhotika S.S."/>
            <person name="Bruce D."/>
            <person name="Campbell C.S."/>
            <person name="Campbell M.L."/>
            <person name="Chen J."/>
            <person name="Chertkov O."/>
            <person name="Cleland C."/>
            <person name="Dimitrijevic M."/>
            <person name="Doggett N.A."/>
            <person name="Fawcett J.J."/>
            <person name="Glavina T."/>
            <person name="Goodwin L.A."/>
            <person name="Hill K.K."/>
            <person name="Hitchcock P."/>
            <person name="Jackson P.J."/>
            <person name="Keim P."/>
            <person name="Kewalramani A.R."/>
            <person name="Longmire J."/>
            <person name="Lucas S."/>
            <person name="Malfatti S."/>
            <person name="McMurry K."/>
            <person name="Meincke L.J."/>
            <person name="Misra M."/>
            <person name="Moseman B.L."/>
            <person name="Mundt M."/>
            <person name="Munk A.C."/>
            <person name="Okinaka R.T."/>
            <person name="Parson-Quintana B."/>
            <person name="Reilly L.P."/>
            <person name="Richardson P."/>
            <person name="Robinson D.L."/>
            <person name="Rubin E."/>
            <person name="Saunders E."/>
            <person name="Tapia R."/>
            <person name="Tesmer J.G."/>
            <person name="Thayer N."/>
            <person name="Thompson L.S."/>
            <person name="Tice H."/>
            <person name="Ticknor L.O."/>
            <person name="Wills P.L."/>
            <person name="Brettin T.S."/>
            <person name="Gilna P."/>
        </authorList>
    </citation>
    <scope>NUCLEOTIDE SEQUENCE [LARGE SCALE GENOMIC DNA]</scope>
    <source>
        <strain>97-27</strain>
    </source>
</reference>
<sequence length="120" mass="13106">MITKADKNATRKKRHARVRAKLTGTAERPRLNVFRSNQHIYAQVIDDVNGVTLVSASTLDKDLALNGTSNIEAATKVGESVAKRAVEKGVKEVVFDRGGYLYHGRVKALAEAAREAGLQF</sequence>
<gene>
    <name evidence="1" type="primary">rplR</name>
    <name type="ordered locus">BT9727_0122</name>
</gene>
<name>RL18_BACHK</name>